<organism>
    <name type="scientific">Acetivibrio thermocellus (strain ATCC 27405 / DSM 1237 / JCM 9322 / NBRC 103400 / NCIMB 10682 / NRRL B-4536 / VPI 7372)</name>
    <name type="common">Clostridium thermocellum</name>
    <dbReference type="NCBI Taxonomy" id="203119"/>
    <lineage>
        <taxon>Bacteria</taxon>
        <taxon>Bacillati</taxon>
        <taxon>Bacillota</taxon>
        <taxon>Clostridia</taxon>
        <taxon>Eubacteriales</taxon>
        <taxon>Oscillospiraceae</taxon>
        <taxon>Acetivibrio</taxon>
    </lineage>
</organism>
<proteinExistence type="inferred from homology"/>
<gene>
    <name evidence="1" type="primary">plsX</name>
    <name type="ordered locus">Cthe_0937</name>
</gene>
<protein>
    <recommendedName>
        <fullName evidence="1">Phosphate acyltransferase</fullName>
        <ecNumber evidence="1">2.3.1.274</ecNumber>
    </recommendedName>
    <alternativeName>
        <fullName evidence="1">Acyl-ACP phosphotransacylase</fullName>
    </alternativeName>
    <alternativeName>
        <fullName evidence="1">Acyl-[acyl-carrier-protein]--phosphate acyltransferase</fullName>
    </alternativeName>
    <alternativeName>
        <fullName evidence="1">Phosphate-acyl-ACP acyltransferase</fullName>
    </alternativeName>
</protein>
<comment type="function">
    <text evidence="1">Catalyzes the reversible formation of acyl-phosphate (acyl-PO(4)) from acyl-[acyl-carrier-protein] (acyl-ACP). This enzyme utilizes acyl-ACP as fatty acyl donor, but not acyl-CoA.</text>
</comment>
<comment type="catalytic activity">
    <reaction evidence="1">
        <text>a fatty acyl-[ACP] + phosphate = an acyl phosphate + holo-[ACP]</text>
        <dbReference type="Rhea" id="RHEA:42292"/>
        <dbReference type="Rhea" id="RHEA-COMP:9685"/>
        <dbReference type="Rhea" id="RHEA-COMP:14125"/>
        <dbReference type="ChEBI" id="CHEBI:43474"/>
        <dbReference type="ChEBI" id="CHEBI:59918"/>
        <dbReference type="ChEBI" id="CHEBI:64479"/>
        <dbReference type="ChEBI" id="CHEBI:138651"/>
        <dbReference type="EC" id="2.3.1.274"/>
    </reaction>
</comment>
<comment type="pathway">
    <text evidence="1">Lipid metabolism; phospholipid metabolism.</text>
</comment>
<comment type="subunit">
    <text evidence="1">Homodimer. Probably interacts with PlsY.</text>
</comment>
<comment type="subcellular location">
    <subcellularLocation>
        <location evidence="1">Cytoplasm</location>
    </subcellularLocation>
    <text evidence="1">Associated with the membrane possibly through PlsY.</text>
</comment>
<comment type="similarity">
    <text evidence="1">Belongs to the PlsX family.</text>
</comment>
<name>PLSX_ACET2</name>
<reference key="1">
    <citation type="submission" date="2007-02" db="EMBL/GenBank/DDBJ databases">
        <title>Complete sequence of Clostridium thermocellum ATCC 27405.</title>
        <authorList>
            <consortium name="US DOE Joint Genome Institute"/>
            <person name="Copeland A."/>
            <person name="Lucas S."/>
            <person name="Lapidus A."/>
            <person name="Barry K."/>
            <person name="Detter J.C."/>
            <person name="Glavina del Rio T."/>
            <person name="Hammon N."/>
            <person name="Israni S."/>
            <person name="Dalin E."/>
            <person name="Tice H."/>
            <person name="Pitluck S."/>
            <person name="Chertkov O."/>
            <person name="Brettin T."/>
            <person name="Bruce D."/>
            <person name="Han C."/>
            <person name="Tapia R."/>
            <person name="Gilna P."/>
            <person name="Schmutz J."/>
            <person name="Larimer F."/>
            <person name="Land M."/>
            <person name="Hauser L."/>
            <person name="Kyrpides N."/>
            <person name="Mikhailova N."/>
            <person name="Wu J.H.D."/>
            <person name="Newcomb M."/>
            <person name="Richardson P."/>
        </authorList>
    </citation>
    <scope>NUCLEOTIDE SEQUENCE [LARGE SCALE GENOMIC DNA]</scope>
    <source>
        <strain>ATCC 27405 / DSM 1237 / JCM 9322 / NBRC 103400 / NCIMB 10682 / NRRL B-4536 / VPI 7372</strain>
    </source>
</reference>
<sequence>MIILVDAMGGDNAPEAIVNGCLDAVSEADGFEILLIGDEGKIREILNKRSYDTSRIKIHHASEVITVEDTPTKAIKTKKDSSMVVGFKLLKEKKGDIFLSCGNSGALMTGALFILGRIKGVDRPAIGAIVPTKAGKGLIIDAGLNTVCKPVNYQQFGIMGSIYMKEMLGIENPKVGLLNIGAEVGKGNETLKQAYSLLSESNINFVGNVEGNDVALGKVDVVVCDGFTGNVLLKFYEGAGSYFYNLIKGIMLKNLKTKMAALMLKKDMKVLKKIMDADENGGAPILGVDGLVFKSHGSSNARTVKNVIIKASKFAETKALDKIRQEFVNMEVEDIEQDL</sequence>
<keyword id="KW-0963">Cytoplasm</keyword>
<keyword id="KW-0444">Lipid biosynthesis</keyword>
<keyword id="KW-0443">Lipid metabolism</keyword>
<keyword id="KW-0594">Phospholipid biosynthesis</keyword>
<keyword id="KW-1208">Phospholipid metabolism</keyword>
<keyword id="KW-1185">Reference proteome</keyword>
<keyword id="KW-0808">Transferase</keyword>
<feature type="chain" id="PRO_1000001752" description="Phosphate acyltransferase">
    <location>
        <begin position="1"/>
        <end position="339"/>
    </location>
</feature>
<accession>A3DDZ2</accession>
<dbReference type="EC" id="2.3.1.274" evidence="1"/>
<dbReference type="EMBL" id="CP000568">
    <property type="protein sequence ID" value="ABN52171.1"/>
    <property type="molecule type" value="Genomic_DNA"/>
</dbReference>
<dbReference type="RefSeq" id="WP_003518607.1">
    <property type="nucleotide sequence ID" value="NC_009012.1"/>
</dbReference>
<dbReference type="SMR" id="A3DDZ2"/>
<dbReference type="STRING" id="203119.Cthe_0937"/>
<dbReference type="GeneID" id="35805367"/>
<dbReference type="KEGG" id="cth:Cthe_0937"/>
<dbReference type="eggNOG" id="COG0416">
    <property type="taxonomic scope" value="Bacteria"/>
</dbReference>
<dbReference type="HOGENOM" id="CLU_039379_1_1_9"/>
<dbReference type="OrthoDB" id="9806408at2"/>
<dbReference type="UniPathway" id="UPA00085"/>
<dbReference type="Proteomes" id="UP000002145">
    <property type="component" value="Chromosome"/>
</dbReference>
<dbReference type="GO" id="GO:0005737">
    <property type="term" value="C:cytoplasm"/>
    <property type="evidence" value="ECO:0007669"/>
    <property type="project" value="UniProtKB-SubCell"/>
</dbReference>
<dbReference type="GO" id="GO:0043811">
    <property type="term" value="F:phosphate:acyl-[acyl carrier protein] acyltransferase activity"/>
    <property type="evidence" value="ECO:0007669"/>
    <property type="project" value="UniProtKB-UniRule"/>
</dbReference>
<dbReference type="GO" id="GO:0006633">
    <property type="term" value="P:fatty acid biosynthetic process"/>
    <property type="evidence" value="ECO:0007669"/>
    <property type="project" value="UniProtKB-UniRule"/>
</dbReference>
<dbReference type="GO" id="GO:0008654">
    <property type="term" value="P:phospholipid biosynthetic process"/>
    <property type="evidence" value="ECO:0007669"/>
    <property type="project" value="UniProtKB-KW"/>
</dbReference>
<dbReference type="Gene3D" id="3.40.718.10">
    <property type="entry name" value="Isopropylmalate Dehydrogenase"/>
    <property type="match status" value="1"/>
</dbReference>
<dbReference type="HAMAP" id="MF_00019">
    <property type="entry name" value="PlsX"/>
    <property type="match status" value="1"/>
</dbReference>
<dbReference type="InterPro" id="IPR003664">
    <property type="entry name" value="FA_synthesis"/>
</dbReference>
<dbReference type="InterPro" id="IPR012281">
    <property type="entry name" value="Phospholipid_synth_PlsX-like"/>
</dbReference>
<dbReference type="NCBIfam" id="TIGR00182">
    <property type="entry name" value="plsX"/>
    <property type="match status" value="1"/>
</dbReference>
<dbReference type="PANTHER" id="PTHR30100">
    <property type="entry name" value="FATTY ACID/PHOSPHOLIPID SYNTHESIS PROTEIN PLSX"/>
    <property type="match status" value="1"/>
</dbReference>
<dbReference type="PANTHER" id="PTHR30100:SF1">
    <property type="entry name" value="PHOSPHATE ACYLTRANSFERASE"/>
    <property type="match status" value="1"/>
</dbReference>
<dbReference type="Pfam" id="PF02504">
    <property type="entry name" value="FA_synthesis"/>
    <property type="match status" value="1"/>
</dbReference>
<dbReference type="PIRSF" id="PIRSF002465">
    <property type="entry name" value="Phsphlp_syn_PlsX"/>
    <property type="match status" value="1"/>
</dbReference>
<dbReference type="SUPFAM" id="SSF53659">
    <property type="entry name" value="Isocitrate/Isopropylmalate dehydrogenase-like"/>
    <property type="match status" value="1"/>
</dbReference>
<evidence type="ECO:0000255" key="1">
    <source>
        <dbReference type="HAMAP-Rule" id="MF_00019"/>
    </source>
</evidence>